<sequence length="902" mass="101772">MLIKLLTKVFGSRNDRTLRRMRKVVEQINRMEPEMEQLSDELLKAKTVEFRGRLAQGAALDSLLPEAFATVREASKRVFGMRHFDVQLLGGMVLNERCIAEMRTGEGKTLTATLPAYLNALTGKGVHVVTVNDYLAQRDAENNRPLFEFLGLSVGINLPGMAAPAKRAAYAADITYGTNNEYGFDYLRDNMAFSPEERVQRKLHYALVDEVDSILIDEARTPLIISGPAEDSSELYIKVDKLIPHLKRQEKEDSDTFQGDGHYSVDEKTRQVNLTERGLVLIEELLADVGIMDEGESLYSPANIMLMHHVTAALRAHALFTRDVDYIVKEGEVIIVDEHTGRTMQGRRWSDGLHQAVEAKEGVQIQNENQTLASITFQNYFRLYEKLAGMTGTADTEAFEFSSIYKLDTIVVPTNRPMIRKDLPDLVYMTEQDKIAAIIEDIRERTAKGQPVLVGTVSIEKSEMVSHELTKAGIAHSVLNAKFHAKEADIVAQAGQPGAVTIATNMAGRGTDIMLGGSWQAEIALLESPTEAQIEAIKAEWQTCHDAVLAAGGLHIIGTERHESRRIDNQLRGRSGRQGDAGSSRFYLSLEDSLMRIFASDRVANMMRKLGMKPGEAIEHPWVTKAIANAQRKVESRNFDIRKQLLEYDDVASDQRRAIYTQRNELLDGGDVVDTINSIREDVFKVVIDSYIPPQSLEEMWDVAGLEERLRNDFDLELPITEWLDKEPELHEETLRERILTMAVEHYQSKEEVVGGEMMRSFEKGIMLQTLDSLWKEHLAAMDYLRQGIHLRGYAQKDPKQEYKRESFAMFAAMLESLKYEVISVLSKVQVRMPEEVEALERQRREDAERLARQQQLSHLDDQSAAAQEMASQTGDRKIGRNDPCPCGSGKKYKQCHGRLNA</sequence>
<organism>
    <name type="scientific">Edwardsiella ictaluri (strain 93-146)</name>
    <dbReference type="NCBI Taxonomy" id="634503"/>
    <lineage>
        <taxon>Bacteria</taxon>
        <taxon>Pseudomonadati</taxon>
        <taxon>Pseudomonadota</taxon>
        <taxon>Gammaproteobacteria</taxon>
        <taxon>Enterobacterales</taxon>
        <taxon>Hafniaceae</taxon>
        <taxon>Edwardsiella</taxon>
    </lineage>
</organism>
<comment type="function">
    <text evidence="1">Part of the Sec protein translocase complex. Interacts with the SecYEG preprotein conducting channel. Has a central role in coupling the hydrolysis of ATP to the transfer of proteins into and across the cell membrane, serving both as a receptor for the preprotein-SecB complex and as an ATP-driven molecular motor driving the stepwise translocation of polypeptide chains across the membrane.</text>
</comment>
<comment type="catalytic activity">
    <reaction evidence="1">
        <text>ATP + H2O + cellular proteinSide 1 = ADP + phosphate + cellular proteinSide 2.</text>
        <dbReference type="EC" id="7.4.2.8"/>
    </reaction>
</comment>
<comment type="cofactor">
    <cofactor evidence="1">
        <name>Zn(2+)</name>
        <dbReference type="ChEBI" id="CHEBI:29105"/>
    </cofactor>
    <text evidence="1">May bind 1 zinc ion per subunit.</text>
</comment>
<comment type="subunit">
    <text evidence="1">Monomer and homodimer. Part of the essential Sec protein translocation apparatus which comprises SecA, SecYEG and auxiliary proteins SecDF-YajC and YidC.</text>
</comment>
<comment type="subcellular location">
    <subcellularLocation>
        <location evidence="1">Cell inner membrane</location>
        <topology evidence="1">Peripheral membrane protein</topology>
        <orientation evidence="1">Cytoplasmic side</orientation>
    </subcellularLocation>
    <subcellularLocation>
        <location evidence="1">Cytoplasm</location>
    </subcellularLocation>
    <text evidence="1">Distribution is 50-50.</text>
</comment>
<comment type="induction">
    <text evidence="1">Repressed under conditions of excess protein secretion capacity and derepressed when protein secretion becomes limiting. This is regulated by SecM.</text>
</comment>
<comment type="similarity">
    <text evidence="1">Belongs to the SecA family.</text>
</comment>
<gene>
    <name evidence="1" type="primary">secA</name>
    <name type="ordered locus">NT01EI_0745</name>
</gene>
<keyword id="KW-0067">ATP-binding</keyword>
<keyword id="KW-0997">Cell inner membrane</keyword>
<keyword id="KW-1003">Cell membrane</keyword>
<keyword id="KW-0963">Cytoplasm</keyword>
<keyword id="KW-0472">Membrane</keyword>
<keyword id="KW-0479">Metal-binding</keyword>
<keyword id="KW-0547">Nucleotide-binding</keyword>
<keyword id="KW-0653">Protein transport</keyword>
<keyword id="KW-1278">Translocase</keyword>
<keyword id="KW-0811">Translocation</keyword>
<keyword id="KW-0813">Transport</keyword>
<keyword id="KW-0862">Zinc</keyword>
<protein>
    <recommendedName>
        <fullName evidence="1">Protein translocase subunit SecA</fullName>
        <ecNumber evidence="1">7.4.2.8</ecNumber>
    </recommendedName>
</protein>
<proteinExistence type="inferred from homology"/>
<name>SECA_EDWI9</name>
<feature type="chain" id="PRO_1000215110" description="Protein translocase subunit SecA">
    <location>
        <begin position="1"/>
        <end position="902"/>
    </location>
</feature>
<feature type="region of interest" description="Disordered" evidence="2">
    <location>
        <begin position="847"/>
        <end position="902"/>
    </location>
</feature>
<feature type="compositionally biased region" description="Basic residues" evidence="2">
    <location>
        <begin position="891"/>
        <end position="902"/>
    </location>
</feature>
<feature type="binding site" evidence="1">
    <location>
        <position position="87"/>
    </location>
    <ligand>
        <name>ATP</name>
        <dbReference type="ChEBI" id="CHEBI:30616"/>
    </ligand>
</feature>
<feature type="binding site" evidence="1">
    <location>
        <begin position="105"/>
        <end position="109"/>
    </location>
    <ligand>
        <name>ATP</name>
        <dbReference type="ChEBI" id="CHEBI:30616"/>
    </ligand>
</feature>
<feature type="binding site" evidence="1">
    <location>
        <position position="512"/>
    </location>
    <ligand>
        <name>ATP</name>
        <dbReference type="ChEBI" id="CHEBI:30616"/>
    </ligand>
</feature>
<feature type="binding site" evidence="1">
    <location>
        <position position="885"/>
    </location>
    <ligand>
        <name>Zn(2+)</name>
        <dbReference type="ChEBI" id="CHEBI:29105"/>
    </ligand>
</feature>
<feature type="binding site" evidence="1">
    <location>
        <position position="887"/>
    </location>
    <ligand>
        <name>Zn(2+)</name>
        <dbReference type="ChEBI" id="CHEBI:29105"/>
    </ligand>
</feature>
<feature type="binding site" evidence="1">
    <location>
        <position position="896"/>
    </location>
    <ligand>
        <name>Zn(2+)</name>
        <dbReference type="ChEBI" id="CHEBI:29105"/>
    </ligand>
</feature>
<feature type="binding site" evidence="1">
    <location>
        <position position="897"/>
    </location>
    <ligand>
        <name>Zn(2+)</name>
        <dbReference type="ChEBI" id="CHEBI:29105"/>
    </ligand>
</feature>
<accession>C5B9G5</accession>
<reference key="1">
    <citation type="submission" date="2009-03" db="EMBL/GenBank/DDBJ databases">
        <title>Complete genome sequence of Edwardsiella ictaluri 93-146.</title>
        <authorList>
            <person name="Williams M.L."/>
            <person name="Gillaspy A.F."/>
            <person name="Dyer D.W."/>
            <person name="Thune R.L."/>
            <person name="Waldbieser G.C."/>
            <person name="Schuster S.C."/>
            <person name="Gipson J."/>
            <person name="Zaitshik J."/>
            <person name="Landry C."/>
            <person name="Lawrence M.L."/>
        </authorList>
    </citation>
    <scope>NUCLEOTIDE SEQUENCE [LARGE SCALE GENOMIC DNA]</scope>
    <source>
        <strain>93-146</strain>
    </source>
</reference>
<dbReference type="EC" id="7.4.2.8" evidence="1"/>
<dbReference type="EMBL" id="CP001600">
    <property type="protein sequence ID" value="ACR67966.1"/>
    <property type="molecule type" value="Genomic_DNA"/>
</dbReference>
<dbReference type="RefSeq" id="WP_015870159.1">
    <property type="nucleotide sequence ID" value="NZ_CP169062.1"/>
</dbReference>
<dbReference type="SMR" id="C5B9G5"/>
<dbReference type="STRING" id="67780.B6E78_14355"/>
<dbReference type="GeneID" id="69537806"/>
<dbReference type="KEGG" id="eic:NT01EI_0745"/>
<dbReference type="PATRIC" id="fig|634503.3.peg.673"/>
<dbReference type="HOGENOM" id="CLU_005314_3_0_6"/>
<dbReference type="OrthoDB" id="9805579at2"/>
<dbReference type="Proteomes" id="UP000001485">
    <property type="component" value="Chromosome"/>
</dbReference>
<dbReference type="GO" id="GO:0031522">
    <property type="term" value="C:cell envelope Sec protein transport complex"/>
    <property type="evidence" value="ECO:0007669"/>
    <property type="project" value="TreeGrafter"/>
</dbReference>
<dbReference type="GO" id="GO:0005829">
    <property type="term" value="C:cytosol"/>
    <property type="evidence" value="ECO:0007669"/>
    <property type="project" value="TreeGrafter"/>
</dbReference>
<dbReference type="GO" id="GO:0005886">
    <property type="term" value="C:plasma membrane"/>
    <property type="evidence" value="ECO:0007669"/>
    <property type="project" value="UniProtKB-SubCell"/>
</dbReference>
<dbReference type="GO" id="GO:0005524">
    <property type="term" value="F:ATP binding"/>
    <property type="evidence" value="ECO:0007669"/>
    <property type="project" value="UniProtKB-UniRule"/>
</dbReference>
<dbReference type="GO" id="GO:0046872">
    <property type="term" value="F:metal ion binding"/>
    <property type="evidence" value="ECO:0007669"/>
    <property type="project" value="UniProtKB-KW"/>
</dbReference>
<dbReference type="GO" id="GO:0008564">
    <property type="term" value="F:protein-exporting ATPase activity"/>
    <property type="evidence" value="ECO:0007669"/>
    <property type="project" value="UniProtKB-EC"/>
</dbReference>
<dbReference type="GO" id="GO:0065002">
    <property type="term" value="P:intracellular protein transmembrane transport"/>
    <property type="evidence" value="ECO:0007669"/>
    <property type="project" value="UniProtKB-UniRule"/>
</dbReference>
<dbReference type="GO" id="GO:0017038">
    <property type="term" value="P:protein import"/>
    <property type="evidence" value="ECO:0007669"/>
    <property type="project" value="InterPro"/>
</dbReference>
<dbReference type="GO" id="GO:0006605">
    <property type="term" value="P:protein targeting"/>
    <property type="evidence" value="ECO:0007669"/>
    <property type="project" value="UniProtKB-UniRule"/>
</dbReference>
<dbReference type="GO" id="GO:0043952">
    <property type="term" value="P:protein transport by the Sec complex"/>
    <property type="evidence" value="ECO:0007669"/>
    <property type="project" value="TreeGrafter"/>
</dbReference>
<dbReference type="CDD" id="cd17928">
    <property type="entry name" value="DEXDc_SecA"/>
    <property type="match status" value="1"/>
</dbReference>
<dbReference type="CDD" id="cd18803">
    <property type="entry name" value="SF2_C_secA"/>
    <property type="match status" value="1"/>
</dbReference>
<dbReference type="FunFam" id="1.10.3060.10:FF:000001">
    <property type="entry name" value="Preprotein translocase subunit SecA"/>
    <property type="match status" value="1"/>
</dbReference>
<dbReference type="FunFam" id="3.40.50.300:FF:000081">
    <property type="entry name" value="Preprotein translocase subunit SecA"/>
    <property type="match status" value="1"/>
</dbReference>
<dbReference type="FunFam" id="3.40.50.300:FF:000113">
    <property type="entry name" value="Preprotein translocase subunit SecA"/>
    <property type="match status" value="1"/>
</dbReference>
<dbReference type="FunFam" id="3.90.1440.10:FF:000001">
    <property type="entry name" value="Preprotein translocase subunit SecA"/>
    <property type="match status" value="1"/>
</dbReference>
<dbReference type="Gene3D" id="1.10.3060.10">
    <property type="entry name" value="Helical scaffold and wing domains of SecA"/>
    <property type="match status" value="1"/>
</dbReference>
<dbReference type="Gene3D" id="3.40.50.300">
    <property type="entry name" value="P-loop containing nucleotide triphosphate hydrolases"/>
    <property type="match status" value="2"/>
</dbReference>
<dbReference type="Gene3D" id="3.90.1440.10">
    <property type="entry name" value="SecA, preprotein cross-linking domain"/>
    <property type="match status" value="1"/>
</dbReference>
<dbReference type="HAMAP" id="MF_01382">
    <property type="entry name" value="SecA"/>
    <property type="match status" value="1"/>
</dbReference>
<dbReference type="InterPro" id="IPR014001">
    <property type="entry name" value="Helicase_ATP-bd"/>
</dbReference>
<dbReference type="InterPro" id="IPR001650">
    <property type="entry name" value="Helicase_C-like"/>
</dbReference>
<dbReference type="InterPro" id="IPR027417">
    <property type="entry name" value="P-loop_NTPase"/>
</dbReference>
<dbReference type="InterPro" id="IPR004027">
    <property type="entry name" value="SEC_C_motif"/>
</dbReference>
<dbReference type="InterPro" id="IPR000185">
    <property type="entry name" value="SecA"/>
</dbReference>
<dbReference type="InterPro" id="IPR020937">
    <property type="entry name" value="SecA_CS"/>
</dbReference>
<dbReference type="InterPro" id="IPR011115">
    <property type="entry name" value="SecA_DEAD"/>
</dbReference>
<dbReference type="InterPro" id="IPR014018">
    <property type="entry name" value="SecA_motor_DEAD"/>
</dbReference>
<dbReference type="InterPro" id="IPR011130">
    <property type="entry name" value="SecA_preprotein_X-link_dom"/>
</dbReference>
<dbReference type="InterPro" id="IPR044722">
    <property type="entry name" value="SecA_SF2_C"/>
</dbReference>
<dbReference type="InterPro" id="IPR011116">
    <property type="entry name" value="SecA_Wing/Scaffold"/>
</dbReference>
<dbReference type="InterPro" id="IPR036266">
    <property type="entry name" value="SecA_Wing/Scaffold_sf"/>
</dbReference>
<dbReference type="InterPro" id="IPR036670">
    <property type="entry name" value="SecA_X-link_sf"/>
</dbReference>
<dbReference type="NCBIfam" id="NF009538">
    <property type="entry name" value="PRK12904.1"/>
    <property type="match status" value="1"/>
</dbReference>
<dbReference type="NCBIfam" id="TIGR00963">
    <property type="entry name" value="secA"/>
    <property type="match status" value="1"/>
</dbReference>
<dbReference type="PANTHER" id="PTHR30612:SF0">
    <property type="entry name" value="CHLOROPLAST PROTEIN-TRANSPORTING ATPASE"/>
    <property type="match status" value="1"/>
</dbReference>
<dbReference type="PANTHER" id="PTHR30612">
    <property type="entry name" value="SECA INNER MEMBRANE COMPONENT OF SEC PROTEIN SECRETION SYSTEM"/>
    <property type="match status" value="1"/>
</dbReference>
<dbReference type="Pfam" id="PF21090">
    <property type="entry name" value="P-loop_SecA"/>
    <property type="match status" value="1"/>
</dbReference>
<dbReference type="Pfam" id="PF02810">
    <property type="entry name" value="SEC-C"/>
    <property type="match status" value="1"/>
</dbReference>
<dbReference type="Pfam" id="PF07517">
    <property type="entry name" value="SecA_DEAD"/>
    <property type="match status" value="1"/>
</dbReference>
<dbReference type="Pfam" id="PF01043">
    <property type="entry name" value="SecA_PP_bind"/>
    <property type="match status" value="1"/>
</dbReference>
<dbReference type="Pfam" id="PF07516">
    <property type="entry name" value="SecA_SW"/>
    <property type="match status" value="1"/>
</dbReference>
<dbReference type="PRINTS" id="PR00906">
    <property type="entry name" value="SECA"/>
</dbReference>
<dbReference type="SMART" id="SM00957">
    <property type="entry name" value="SecA_DEAD"/>
    <property type="match status" value="1"/>
</dbReference>
<dbReference type="SMART" id="SM00958">
    <property type="entry name" value="SecA_PP_bind"/>
    <property type="match status" value="1"/>
</dbReference>
<dbReference type="SUPFAM" id="SSF81886">
    <property type="entry name" value="Helical scaffold and wing domains of SecA"/>
    <property type="match status" value="1"/>
</dbReference>
<dbReference type="SUPFAM" id="SSF52540">
    <property type="entry name" value="P-loop containing nucleoside triphosphate hydrolases"/>
    <property type="match status" value="2"/>
</dbReference>
<dbReference type="SUPFAM" id="SSF81767">
    <property type="entry name" value="Pre-protein crosslinking domain of SecA"/>
    <property type="match status" value="1"/>
</dbReference>
<dbReference type="PROSITE" id="PS01312">
    <property type="entry name" value="SECA"/>
    <property type="match status" value="1"/>
</dbReference>
<dbReference type="PROSITE" id="PS51196">
    <property type="entry name" value="SECA_MOTOR_DEAD"/>
    <property type="match status" value="1"/>
</dbReference>
<evidence type="ECO:0000255" key="1">
    <source>
        <dbReference type="HAMAP-Rule" id="MF_01382"/>
    </source>
</evidence>
<evidence type="ECO:0000256" key="2">
    <source>
        <dbReference type="SAM" id="MobiDB-lite"/>
    </source>
</evidence>